<proteinExistence type="evidence at protein level"/>
<accession>Q5W959</accession>
<reference key="1">
    <citation type="journal article" date="2005" name="Toxicon">
        <title>Molecular cloning of serine proteinases from Bothrops jararaca venom gland.</title>
        <authorList>
            <person name="Saguchi K."/>
            <person name="Hagiwara-Saguchi Y."/>
            <person name="Murayama N."/>
            <person name="Ohi H."/>
            <person name="Fujita Y."/>
            <person name="Camargo A.C.M."/>
            <person name="Serrano S.M.T."/>
            <person name="Higuchi S."/>
        </authorList>
    </citation>
    <scope>NUCLEOTIDE SEQUENCE [MRNA]</scope>
    <source>
        <tissue>Venom gland</tissue>
    </source>
</reference>
<reference key="2">
    <citation type="journal article" date="2018" name="Toxicol. Appl. Pharmacol.">
        <title>BjSP, a novel serine protease from Bothrops jararaca snake venom that degrades fibrinogen without forming fibrin clots.</title>
        <authorList>
            <person name="Carone S.E.I."/>
            <person name="Menaldo D.L."/>
            <person name="Sartim M.A."/>
            <person name="Bernardes C.P."/>
            <person name="Caetano R.C."/>
            <person name="da Silva R.R."/>
            <person name="Cabral H."/>
            <person name="Barraviera B."/>
            <person name="Ferreira Junior R.S."/>
            <person name="Sampaio S.V."/>
        </authorList>
    </citation>
    <scope>PROTEIN SEQUENCE OF 25-64</scope>
    <scope>IDENTIFICATION BY MASS SPECTROMETRY</scope>
    <scope>FUNCTION</scope>
    <scope>SUBCELLULAR LOCATION</scope>
    <scope>GLYCOSYLATION</scope>
    <scope>ACTIVITY REGULATION</scope>
    <scope>BIOPHYSICOCHEMICAL PROPERTIES</scope>
    <scope>PROBABLE GLYCOSYLATION AT ASN-44</scope>
    <source>
        <tissue>Venom</tissue>
    </source>
</reference>
<reference key="3">
    <citation type="journal article" date="2010" name="J. Proteome Res.">
        <title>Analysis of the ontogenetic variation in the venom proteome/peptidome of Bothrops jararaca reveals different strategies to deal with prey.</title>
        <authorList>
            <person name="Zelanis A."/>
            <person name="Tashima A.K."/>
            <person name="Rocha M.M."/>
            <person name="Furtado M.F."/>
            <person name="Camargo A.C."/>
            <person name="Ho P.L."/>
            <person name="Serrano S.M."/>
        </authorList>
    </citation>
    <scope>IDENTIFICATION BY MASS SPECTROMETRY</scope>
    <scope>DEVELOPMENTAL STAGE</scope>
    <scope>GLYCOSYLATION</scope>
    <source>
        <tissue>Venom</tissue>
    </source>
</reference>
<reference key="4">
    <citation type="journal article" date="2020" name="Sci. Rep.">
        <title>Beyond hemostasis: a snake venom serine protease with potassium channel blocking and potential antitumor activities.</title>
        <authorList>
            <person name="Boldrini-Franca J."/>
            <person name="Pinheiro-Junior E.L."/>
            <person name="Peigneur S."/>
            <person name="Pucca M.B."/>
            <person name="Cerni F.A."/>
            <person name="Borges R.J."/>
            <person name="Costa T.R."/>
            <person name="Carone S.E.I."/>
            <person name="Fontes M.R.M."/>
            <person name="Sampaio S.V."/>
            <person name="Arantes E.C."/>
            <person name="Tytgat J."/>
        </authorList>
    </citation>
    <scope>LACK OF ACTIVITY ON POTASSIUM CHANNELS</scope>
</reference>
<comment type="function">
    <text evidence="5">Snake venom serine protease that shows non-specific action on fibrinogen (PubMed:30145175). It preferentially degrades fibrinogen Aalpha (FGA), releasing fibrinopeptide A, and shows a lower activity on fibrinogen Bbeta (FGB), releasing fibrinopeptide B and other uncommon fibrinopeptides (PubMed:30145175). Also shows low fibrinolytic activity compared to plasmin (PubMed:30145175). Has high enzymatic activity on the substrates for activated protein C and factor XIa, and for thrombin (PubMed:30145175). Shows a wide activity spectrum at different peptide sequences, with a preferential cleavage at Lys-|-Xaa over Arg-|-Xaa bonds (PubMed:30145175).</text>
</comment>
<comment type="activity regulation">
    <text evidence="5">Inhibited by benzamidine, PMSF, leupeptin, SDS and DTT, but not by EDTA, and commercial antivenom.</text>
</comment>
<comment type="biophysicochemical properties">
    <phDependence>
        <text evidence="5">Optimum pH is 7.5.</text>
    </phDependence>
    <temperatureDependence>
        <text evidence="5">Optimum temperature is 50 degrees Celsius.</text>
    </temperatureDependence>
</comment>
<comment type="subunit">
    <text evidence="1">Monomer.</text>
</comment>
<comment type="subcellular location">
    <subcellularLocation>
        <location evidence="5">Secreted</location>
    </subcellularLocation>
</comment>
<comment type="tissue specificity">
    <text evidence="11">Expressed by the venom gland.</text>
</comment>
<comment type="developmental stage">
    <text evidence="4">This protein seems to be found in adult B.jararaca venom but not in newborn snake venom.</text>
</comment>
<comment type="PTM">
    <text evidence="5">N-glycosylated. Contains approximately 10% carbohydrates.</text>
</comment>
<comment type="miscellaneous">
    <text evidence="5 6">Negative results: does not cleave fibrinogen gamma chain (FGG) (PubMed:30145175). Does not form fibrin clots from fibrinogen solutions (PubMed:30145175). Has no effect on aggregation of washed platelets (PubMed:30145175). Has minor effects on the substrate for plasma kallikrein, plasmin and factor Xa, and also on certain isolated factors, such as prothrombin, factor X and protein C, not inducing the formation of their activated forms (PubMed:30145175). Also shows a very weak inhibitory activity on the human voltage-gated potassium channel Kv10.1/KCNH1/EAG1 (9.2% current inhibition at 5 uM) (PubMed:32161292).</text>
</comment>
<comment type="similarity">
    <text evidence="3">Belongs to the peptidase S1 family. Snake venom subfamily.</text>
</comment>
<sequence length="258" mass="27843">MVLVRVVANLLILQLSYAQKVSELVVGGDECNINEHRSLVAIFNSTGFFCSGILLNQEWVLTASHCDSTNFQMKIGVHSKKTLNQDEQTRNPKEKIFCPNKKNDDALDKDLMLVRLDSPVSDSEHIAPLSLPSSPPSVGSVCRIMGWGSITPIQKTNPDVPHCANINLLDDAVCRAAYPELPAEYRTLCAGVPEGGIDTCNGDSGGPLICNGQFQGIVFYGAHPCGQAPKPGLYTKVIDYNTWIESVIAGNTAATCPP</sequence>
<evidence type="ECO:0000250" key="1">
    <source>
        <dbReference type="UniProtKB" id="Q7SZE1"/>
    </source>
</evidence>
<evidence type="ECO:0000255" key="2"/>
<evidence type="ECO:0000255" key="3">
    <source>
        <dbReference type="PROSITE-ProRule" id="PRU00274"/>
    </source>
</evidence>
<evidence type="ECO:0000269" key="4">
    <source>
    </source>
</evidence>
<evidence type="ECO:0000269" key="5">
    <source>
    </source>
</evidence>
<evidence type="ECO:0000269" key="6">
    <source>
    </source>
</evidence>
<evidence type="ECO:0000303" key="7">
    <source>
    </source>
</evidence>
<evidence type="ECO:0000303" key="8">
    <source>
    </source>
</evidence>
<evidence type="ECO:0000305" key="9"/>
<evidence type="ECO:0000305" key="10">
    <source>
    </source>
</evidence>
<evidence type="ECO:0000305" key="11">
    <source>
    </source>
</evidence>
<name>VSP14_BOTJA</name>
<keyword id="KW-0903">Direct protein sequencing</keyword>
<keyword id="KW-1015">Disulfide bond</keyword>
<keyword id="KW-1206">Fibrinogenolytic toxin</keyword>
<keyword id="KW-1205">Fibrinolytic toxin</keyword>
<keyword id="KW-0325">Glycoprotein</keyword>
<keyword id="KW-1199">Hemostasis impairing toxin</keyword>
<keyword id="KW-0378">Hydrolase</keyword>
<keyword id="KW-0645">Protease</keyword>
<keyword id="KW-0964">Secreted</keyword>
<keyword id="KW-0720">Serine protease</keyword>
<keyword id="KW-0732">Signal</keyword>
<keyword id="KW-0800">Toxin</keyword>
<keyword id="KW-0865">Zymogen</keyword>
<feature type="signal peptide" evidence="2">
    <location>
        <begin position="1"/>
        <end position="18"/>
    </location>
</feature>
<feature type="propeptide" id="PRO_0000294989" evidence="11">
    <location>
        <begin position="19"/>
        <end position="24"/>
    </location>
</feature>
<feature type="chain" id="PRO_5000051172" description="Snake venom serine protease HS114" evidence="5">
    <location>
        <begin position="25"/>
        <end position="258"/>
    </location>
</feature>
<feature type="domain" description="Peptidase S1" evidence="3">
    <location>
        <begin position="25"/>
        <end position="249"/>
    </location>
</feature>
<feature type="active site" description="Charge relay system" evidence="1">
    <location>
        <position position="65"/>
    </location>
</feature>
<feature type="active site" description="Charge relay system" evidence="1">
    <location>
        <position position="110"/>
    </location>
</feature>
<feature type="active site" description="Charge relay system" evidence="1">
    <location>
        <position position="204"/>
    </location>
</feature>
<feature type="glycosylation site" description="N-linked (GlcNAc...) asparagine" evidence="10 11">
    <location>
        <position position="44"/>
    </location>
</feature>
<feature type="disulfide bond" evidence="1">
    <location>
        <begin position="31"/>
        <end position="163"/>
    </location>
</feature>
<feature type="disulfide bond" evidence="1">
    <location>
        <begin position="50"/>
        <end position="66"/>
    </location>
</feature>
<feature type="disulfide bond" evidence="1">
    <location>
        <begin position="98"/>
        <end position="256"/>
    </location>
</feature>
<feature type="disulfide bond" evidence="1">
    <location>
        <begin position="142"/>
        <end position="210"/>
    </location>
</feature>
<feature type="disulfide bond" evidence="1">
    <location>
        <begin position="174"/>
        <end position="189"/>
    </location>
</feature>
<feature type="disulfide bond" evidence="1">
    <location>
        <begin position="200"/>
        <end position="225"/>
    </location>
</feature>
<dbReference type="EC" id="3.4.21.-"/>
<dbReference type="EMBL" id="AB178322">
    <property type="protein sequence ID" value="BAD66928.1"/>
    <property type="molecule type" value="mRNA"/>
</dbReference>
<dbReference type="SMR" id="Q5W959"/>
<dbReference type="MEROPS" id="S01.023"/>
<dbReference type="iPTMnet" id="Q5W959"/>
<dbReference type="GO" id="GO:0005576">
    <property type="term" value="C:extracellular region"/>
    <property type="evidence" value="ECO:0007669"/>
    <property type="project" value="UniProtKB-SubCell"/>
</dbReference>
<dbReference type="GO" id="GO:0030141">
    <property type="term" value="C:secretory granule"/>
    <property type="evidence" value="ECO:0007669"/>
    <property type="project" value="TreeGrafter"/>
</dbReference>
<dbReference type="GO" id="GO:0004252">
    <property type="term" value="F:serine-type endopeptidase activity"/>
    <property type="evidence" value="ECO:0007669"/>
    <property type="project" value="InterPro"/>
</dbReference>
<dbReference type="GO" id="GO:0090729">
    <property type="term" value="F:toxin activity"/>
    <property type="evidence" value="ECO:0007669"/>
    <property type="project" value="UniProtKB-KW"/>
</dbReference>
<dbReference type="GO" id="GO:0006508">
    <property type="term" value="P:proteolysis"/>
    <property type="evidence" value="ECO:0007669"/>
    <property type="project" value="UniProtKB-KW"/>
</dbReference>
<dbReference type="CDD" id="cd00190">
    <property type="entry name" value="Tryp_SPc"/>
    <property type="match status" value="1"/>
</dbReference>
<dbReference type="FunFam" id="2.40.10.10:FF:000158">
    <property type="entry name" value="Thrombin-like enzyme saxthrombin"/>
    <property type="match status" value="1"/>
</dbReference>
<dbReference type="Gene3D" id="2.40.10.10">
    <property type="entry name" value="Trypsin-like serine proteases"/>
    <property type="match status" value="2"/>
</dbReference>
<dbReference type="InterPro" id="IPR009003">
    <property type="entry name" value="Peptidase_S1_PA"/>
</dbReference>
<dbReference type="InterPro" id="IPR043504">
    <property type="entry name" value="Peptidase_S1_PA_chymotrypsin"/>
</dbReference>
<dbReference type="InterPro" id="IPR001314">
    <property type="entry name" value="Peptidase_S1A"/>
</dbReference>
<dbReference type="InterPro" id="IPR001254">
    <property type="entry name" value="Trypsin_dom"/>
</dbReference>
<dbReference type="InterPro" id="IPR018114">
    <property type="entry name" value="TRYPSIN_HIS"/>
</dbReference>
<dbReference type="InterPro" id="IPR033116">
    <property type="entry name" value="TRYPSIN_SER"/>
</dbReference>
<dbReference type="PANTHER" id="PTHR24271:SF47">
    <property type="entry name" value="KALLIKREIN-1"/>
    <property type="match status" value="1"/>
</dbReference>
<dbReference type="PANTHER" id="PTHR24271">
    <property type="entry name" value="KALLIKREIN-RELATED"/>
    <property type="match status" value="1"/>
</dbReference>
<dbReference type="Pfam" id="PF00089">
    <property type="entry name" value="Trypsin"/>
    <property type="match status" value="1"/>
</dbReference>
<dbReference type="PRINTS" id="PR00722">
    <property type="entry name" value="CHYMOTRYPSIN"/>
</dbReference>
<dbReference type="SMART" id="SM00020">
    <property type="entry name" value="Tryp_SPc"/>
    <property type="match status" value="1"/>
</dbReference>
<dbReference type="SUPFAM" id="SSF50494">
    <property type="entry name" value="Trypsin-like serine proteases"/>
    <property type="match status" value="1"/>
</dbReference>
<dbReference type="PROSITE" id="PS50240">
    <property type="entry name" value="TRYPSIN_DOM"/>
    <property type="match status" value="1"/>
</dbReference>
<dbReference type="PROSITE" id="PS00134">
    <property type="entry name" value="TRYPSIN_HIS"/>
    <property type="match status" value="1"/>
</dbReference>
<dbReference type="PROSITE" id="PS00135">
    <property type="entry name" value="TRYPSIN_SER"/>
    <property type="match status" value="1"/>
</dbReference>
<organism>
    <name type="scientific">Bothrops jararaca</name>
    <name type="common">Jararaca</name>
    <name type="synonym">Bothrops jajaraca</name>
    <dbReference type="NCBI Taxonomy" id="8724"/>
    <lineage>
        <taxon>Eukaryota</taxon>
        <taxon>Metazoa</taxon>
        <taxon>Chordata</taxon>
        <taxon>Craniata</taxon>
        <taxon>Vertebrata</taxon>
        <taxon>Euteleostomi</taxon>
        <taxon>Lepidosauria</taxon>
        <taxon>Squamata</taxon>
        <taxon>Bifurcata</taxon>
        <taxon>Unidentata</taxon>
        <taxon>Episquamata</taxon>
        <taxon>Toxicofera</taxon>
        <taxon>Serpentes</taxon>
        <taxon>Colubroidea</taxon>
        <taxon>Viperidae</taxon>
        <taxon>Crotalinae</taxon>
        <taxon>Bothrops</taxon>
    </lineage>
</organism>
<protein>
    <recommendedName>
        <fullName evidence="7">Snake venom serine protease HS114</fullName>
        <shortName>SVSP</shortName>
        <ecNumber>3.4.21.-</ecNumber>
    </recommendedName>
    <alternativeName>
        <fullName evidence="8">BjSP</fullName>
    </alternativeName>
    <alternativeName>
        <fullName evidence="9">Thrombin-like enzyme HS114</fullName>
        <shortName evidence="9">SVTLE</shortName>
    </alternativeName>
</protein>